<organism>
    <name type="scientific">Lactobacillus delbrueckii subsp. bulgaricus (strain ATCC 11842 / DSM 20081 / BCRC 10696 / JCM 1002 / NBRC 13953 / NCIMB 11778 / NCTC 12712 / WDCM 00102 / Lb 14)</name>
    <dbReference type="NCBI Taxonomy" id="390333"/>
    <lineage>
        <taxon>Bacteria</taxon>
        <taxon>Bacillati</taxon>
        <taxon>Bacillota</taxon>
        <taxon>Bacilli</taxon>
        <taxon>Lactobacillales</taxon>
        <taxon>Lactobacillaceae</taxon>
        <taxon>Lactobacillus</taxon>
    </lineage>
</organism>
<keyword id="KW-0342">GTP-binding</keyword>
<keyword id="KW-0547">Nucleotide-binding</keyword>
<keyword id="KW-1185">Reference proteome</keyword>
<keyword id="KW-0677">Repeat</keyword>
<keyword id="KW-0690">Ribosome biogenesis</keyword>
<reference key="1">
    <citation type="submission" date="2002-04" db="EMBL/GenBank/DDBJ databases">
        <title>Lactobacillus delbreuckii spp. bulgaricus hlbA region.</title>
        <authorList>
            <person name="Serror P."/>
            <person name="Dervyn R."/>
            <person name="Ehrlich S.D."/>
            <person name="Maguin E."/>
        </authorList>
    </citation>
    <scope>NUCLEOTIDE SEQUENCE [GENOMIC DNA]</scope>
</reference>
<reference key="2">
    <citation type="journal article" date="2006" name="Proc. Natl. Acad. Sci. U.S.A.">
        <title>The complete genome sequence of Lactobacillus bulgaricus reveals extensive and ongoing reductive evolution.</title>
        <authorList>
            <person name="van de Guchte M."/>
            <person name="Penaud S."/>
            <person name="Grimaldi C."/>
            <person name="Barbe V."/>
            <person name="Bryson K."/>
            <person name="Nicolas P."/>
            <person name="Robert C."/>
            <person name="Oztas S."/>
            <person name="Mangenot S."/>
            <person name="Couloux A."/>
            <person name="Loux V."/>
            <person name="Dervyn R."/>
            <person name="Bossy R."/>
            <person name="Bolotin A."/>
            <person name="Batto J.-M."/>
            <person name="Walunas T."/>
            <person name="Gibrat J.-F."/>
            <person name="Bessieres P."/>
            <person name="Weissenbach J."/>
            <person name="Ehrlich S.D."/>
            <person name="Maguin E."/>
        </authorList>
    </citation>
    <scope>NUCLEOTIDE SEQUENCE [LARGE SCALE GENOMIC DNA]</scope>
    <source>
        <strain>ATCC 11842 / DSM 20081 / BCRC 10696 / JCM 1002 / NBRC 13953 / NCIMB 11778 / NCTC 12712 / WDCM 00102 / Lb 14</strain>
    </source>
</reference>
<name>DER_LACDA</name>
<feature type="chain" id="PRO_0000179002" description="GTPase Der">
    <location>
        <begin position="1"/>
        <end position="435"/>
    </location>
</feature>
<feature type="domain" description="EngA-type G 1">
    <location>
        <begin position="4"/>
        <end position="167"/>
    </location>
</feature>
<feature type="domain" description="EngA-type G 2">
    <location>
        <begin position="175"/>
        <end position="350"/>
    </location>
</feature>
<feature type="domain" description="KH-like" evidence="1">
    <location>
        <begin position="351"/>
        <end position="435"/>
    </location>
</feature>
<feature type="binding site" evidence="1">
    <location>
        <begin position="10"/>
        <end position="17"/>
    </location>
    <ligand>
        <name>GTP</name>
        <dbReference type="ChEBI" id="CHEBI:37565"/>
        <label>1</label>
    </ligand>
</feature>
<feature type="binding site" evidence="1">
    <location>
        <begin position="57"/>
        <end position="61"/>
    </location>
    <ligand>
        <name>GTP</name>
        <dbReference type="ChEBI" id="CHEBI:37565"/>
        <label>1</label>
    </ligand>
</feature>
<feature type="binding site" evidence="1">
    <location>
        <begin position="119"/>
        <end position="122"/>
    </location>
    <ligand>
        <name>GTP</name>
        <dbReference type="ChEBI" id="CHEBI:37565"/>
        <label>1</label>
    </ligand>
</feature>
<feature type="binding site" evidence="1">
    <location>
        <begin position="181"/>
        <end position="188"/>
    </location>
    <ligand>
        <name>GTP</name>
        <dbReference type="ChEBI" id="CHEBI:37565"/>
        <label>2</label>
    </ligand>
</feature>
<feature type="binding site" evidence="1">
    <location>
        <begin position="228"/>
        <end position="232"/>
    </location>
    <ligand>
        <name>GTP</name>
        <dbReference type="ChEBI" id="CHEBI:37565"/>
        <label>2</label>
    </ligand>
</feature>
<feature type="binding site" evidence="1">
    <location>
        <begin position="293"/>
        <end position="296"/>
    </location>
    <ligand>
        <name>GTP</name>
        <dbReference type="ChEBI" id="CHEBI:37565"/>
        <label>2</label>
    </ligand>
</feature>
<proteinExistence type="inferred from homology"/>
<evidence type="ECO:0000255" key="1">
    <source>
        <dbReference type="HAMAP-Rule" id="MF_00195"/>
    </source>
</evidence>
<comment type="function">
    <text evidence="1">GTPase that plays an essential role in the late steps of ribosome biogenesis.</text>
</comment>
<comment type="subunit">
    <text evidence="1">Associates with the 50S ribosomal subunit.</text>
</comment>
<comment type="similarity">
    <text evidence="1">Belongs to the TRAFAC class TrmE-Era-EngA-EngB-Septin-like GTPase superfamily. EngA (Der) GTPase family.</text>
</comment>
<gene>
    <name evidence="1" type="primary">der</name>
    <name type="synonym">engA</name>
    <name type="ordered locus">Ldb0852</name>
</gene>
<protein>
    <recommendedName>
        <fullName evidence="1">GTPase Der</fullName>
    </recommendedName>
    <alternativeName>
        <fullName evidence="1">GTP-binding protein EngA</fullName>
    </alternativeName>
</protein>
<accession>Q8KH12</accession>
<accession>Q1GAJ9</accession>
<dbReference type="EMBL" id="AY094626">
    <property type="protein sequence ID" value="AAM22484.1"/>
    <property type="molecule type" value="Genomic_DNA"/>
</dbReference>
<dbReference type="EMBL" id="CR954253">
    <property type="protein sequence ID" value="CAI97674.1"/>
    <property type="molecule type" value="Genomic_DNA"/>
</dbReference>
<dbReference type="RefSeq" id="WP_003624291.1">
    <property type="nucleotide sequence ID" value="NZ_JQAV01000008.1"/>
</dbReference>
<dbReference type="SMR" id="Q8KH12"/>
<dbReference type="STRING" id="390333.Ldb0852"/>
<dbReference type="KEGG" id="ldb:Ldb0852"/>
<dbReference type="PATRIC" id="fig|390333.13.peg.1889"/>
<dbReference type="eggNOG" id="COG1160">
    <property type="taxonomic scope" value="Bacteria"/>
</dbReference>
<dbReference type="HOGENOM" id="CLU_016077_6_2_9"/>
<dbReference type="BioCyc" id="LDEL390333:LDB_RS03740-MONOMER"/>
<dbReference type="Proteomes" id="UP000001259">
    <property type="component" value="Chromosome"/>
</dbReference>
<dbReference type="GO" id="GO:0005525">
    <property type="term" value="F:GTP binding"/>
    <property type="evidence" value="ECO:0007669"/>
    <property type="project" value="UniProtKB-UniRule"/>
</dbReference>
<dbReference type="GO" id="GO:0043022">
    <property type="term" value="F:ribosome binding"/>
    <property type="evidence" value="ECO:0007669"/>
    <property type="project" value="TreeGrafter"/>
</dbReference>
<dbReference type="GO" id="GO:0042254">
    <property type="term" value="P:ribosome biogenesis"/>
    <property type="evidence" value="ECO:0007669"/>
    <property type="project" value="UniProtKB-KW"/>
</dbReference>
<dbReference type="CDD" id="cd01894">
    <property type="entry name" value="EngA1"/>
    <property type="match status" value="1"/>
</dbReference>
<dbReference type="CDD" id="cd01895">
    <property type="entry name" value="EngA2"/>
    <property type="match status" value="1"/>
</dbReference>
<dbReference type="FunFam" id="3.30.300.20:FF:000004">
    <property type="entry name" value="GTPase Der"/>
    <property type="match status" value="1"/>
</dbReference>
<dbReference type="FunFam" id="3.40.50.300:FF:000040">
    <property type="entry name" value="GTPase Der"/>
    <property type="match status" value="1"/>
</dbReference>
<dbReference type="FunFam" id="3.40.50.300:FF:000057">
    <property type="entry name" value="GTPase Der"/>
    <property type="match status" value="1"/>
</dbReference>
<dbReference type="Gene3D" id="3.30.300.20">
    <property type="match status" value="1"/>
</dbReference>
<dbReference type="Gene3D" id="3.40.50.300">
    <property type="entry name" value="P-loop containing nucleotide triphosphate hydrolases"/>
    <property type="match status" value="2"/>
</dbReference>
<dbReference type="HAMAP" id="MF_00195">
    <property type="entry name" value="GTPase_Der"/>
    <property type="match status" value="1"/>
</dbReference>
<dbReference type="InterPro" id="IPR031166">
    <property type="entry name" value="G_ENGA"/>
</dbReference>
<dbReference type="InterPro" id="IPR006073">
    <property type="entry name" value="GTP-bd"/>
</dbReference>
<dbReference type="InterPro" id="IPR016484">
    <property type="entry name" value="GTPase_Der"/>
</dbReference>
<dbReference type="InterPro" id="IPR032859">
    <property type="entry name" value="KH_dom-like"/>
</dbReference>
<dbReference type="InterPro" id="IPR015946">
    <property type="entry name" value="KH_dom-like_a/b"/>
</dbReference>
<dbReference type="InterPro" id="IPR027417">
    <property type="entry name" value="P-loop_NTPase"/>
</dbReference>
<dbReference type="InterPro" id="IPR005225">
    <property type="entry name" value="Small_GTP-bd"/>
</dbReference>
<dbReference type="NCBIfam" id="TIGR03594">
    <property type="entry name" value="GTPase_EngA"/>
    <property type="match status" value="1"/>
</dbReference>
<dbReference type="NCBIfam" id="TIGR00231">
    <property type="entry name" value="small_GTP"/>
    <property type="match status" value="2"/>
</dbReference>
<dbReference type="PANTHER" id="PTHR43834">
    <property type="entry name" value="GTPASE DER"/>
    <property type="match status" value="1"/>
</dbReference>
<dbReference type="PANTHER" id="PTHR43834:SF6">
    <property type="entry name" value="GTPASE DER"/>
    <property type="match status" value="1"/>
</dbReference>
<dbReference type="Pfam" id="PF14714">
    <property type="entry name" value="KH_dom-like"/>
    <property type="match status" value="1"/>
</dbReference>
<dbReference type="Pfam" id="PF01926">
    <property type="entry name" value="MMR_HSR1"/>
    <property type="match status" value="2"/>
</dbReference>
<dbReference type="PIRSF" id="PIRSF006485">
    <property type="entry name" value="GTP-binding_EngA"/>
    <property type="match status" value="1"/>
</dbReference>
<dbReference type="SUPFAM" id="SSF52540">
    <property type="entry name" value="P-loop containing nucleoside triphosphate hydrolases"/>
    <property type="match status" value="2"/>
</dbReference>
<dbReference type="PROSITE" id="PS51712">
    <property type="entry name" value="G_ENGA"/>
    <property type="match status" value="2"/>
</dbReference>
<sequence length="435" mass="48624">MPLPIVAIVGQPNVGKSTLFNRIINERVAIVEDRPGVTRDRNYARASWMGHQFSIIDTGGITWEDSTIDEEIRAQAEIAIEEADVIVMLADASQGVTSLDERIAHLLYRADKPVLLAVNKADNPEQRTDIYDFYSLGLGDPIPVSGSHGTGIGDLLDEVVKNFSPDAEKTEEGVISFSVIGRPNVGKSSIVNRLLGEERVIVANEEGTTRDAIDTPFVKDGTKFRVVDTAGIRRRGKVYEKTEKYSVMRAMSAMERSDVAILVLDASTGIREQDKHVAGYAHEAGLGMIIAVNKWDLPKKDSSSGKDFEAVIREEFSYLDYAPIVFVSAKTGKNIDQLPKMVKEVYENKNQRIQSSVLNDLLLEASRLVPAPMVKGKRLRVYYMTQVKTNPPTFVVFCNDPELMHFSYQRFLINQLRENFDFTGTPIKILPRKRK</sequence>